<accession>Q9SLC3</accession>
<accession>Q4FE38</accession>
<organism>
    <name type="scientific">Arabidopsis thaliana</name>
    <name type="common">Mouse-ear cress</name>
    <dbReference type="NCBI Taxonomy" id="3702"/>
    <lineage>
        <taxon>Eukaryota</taxon>
        <taxon>Viridiplantae</taxon>
        <taxon>Streptophyta</taxon>
        <taxon>Embryophyta</taxon>
        <taxon>Tracheophyta</taxon>
        <taxon>Spermatophyta</taxon>
        <taxon>Magnoliopsida</taxon>
        <taxon>eudicotyledons</taxon>
        <taxon>Gunneridae</taxon>
        <taxon>Pentapetalae</taxon>
        <taxon>rosids</taxon>
        <taxon>malvids</taxon>
        <taxon>Brassicales</taxon>
        <taxon>Brassicaceae</taxon>
        <taxon>Camelineae</taxon>
        <taxon>Arabidopsis</taxon>
    </lineage>
</organism>
<feature type="chain" id="PRO_0000055784" description="E3 ubiquitin-protein ligase ATL41">
    <location>
        <begin position="1"/>
        <end position="236"/>
    </location>
</feature>
<feature type="transmembrane region" description="Helical" evidence="2">
    <location>
        <begin position="31"/>
        <end position="51"/>
    </location>
</feature>
<feature type="zinc finger region" description="RING-type; atypical" evidence="3">
    <location>
        <begin position="108"/>
        <end position="150"/>
    </location>
</feature>
<keyword id="KW-0472">Membrane</keyword>
<keyword id="KW-0479">Metal-binding</keyword>
<keyword id="KW-1185">Reference proteome</keyword>
<keyword id="KW-0808">Transferase</keyword>
<keyword id="KW-0812">Transmembrane</keyword>
<keyword id="KW-1133">Transmembrane helix</keyword>
<keyword id="KW-0833">Ubl conjugation pathway</keyword>
<keyword id="KW-0862">Zinc</keyword>
<keyword id="KW-0863">Zinc-finger</keyword>
<reference key="1">
    <citation type="journal article" date="2005" name="Plant Physiol.">
        <title>Functional analysis of the RING-type ubiquitin ligase family of Arabidopsis.</title>
        <authorList>
            <person name="Stone S.L."/>
            <person name="Hauksdottir H."/>
            <person name="Troy A."/>
            <person name="Herschleb J."/>
            <person name="Kraft E."/>
            <person name="Callis J."/>
        </authorList>
    </citation>
    <scope>NUCLEOTIDE SEQUENCE [GENOMIC DNA]</scope>
    <scope>FUNCTION</scope>
    <scope>CATALYTIC ACTIVITY</scope>
    <source>
        <strain>cv. Columbia</strain>
        <tissue>Leaf</tissue>
    </source>
</reference>
<reference key="2">
    <citation type="journal article" date="1999" name="Nature">
        <title>Sequence and analysis of chromosome 2 of the plant Arabidopsis thaliana.</title>
        <authorList>
            <person name="Lin X."/>
            <person name="Kaul S."/>
            <person name="Rounsley S.D."/>
            <person name="Shea T.P."/>
            <person name="Benito M.-I."/>
            <person name="Town C.D."/>
            <person name="Fujii C.Y."/>
            <person name="Mason T.M."/>
            <person name="Bowman C.L."/>
            <person name="Barnstead M.E."/>
            <person name="Feldblyum T.V."/>
            <person name="Buell C.R."/>
            <person name="Ketchum K.A."/>
            <person name="Lee J.J."/>
            <person name="Ronning C.M."/>
            <person name="Koo H.L."/>
            <person name="Moffat K.S."/>
            <person name="Cronin L.A."/>
            <person name="Shen M."/>
            <person name="Pai G."/>
            <person name="Van Aken S."/>
            <person name="Umayam L."/>
            <person name="Tallon L.J."/>
            <person name="Gill J.E."/>
            <person name="Adams M.D."/>
            <person name="Carrera A.J."/>
            <person name="Creasy T.H."/>
            <person name="Goodman H.M."/>
            <person name="Somerville C.R."/>
            <person name="Copenhaver G.P."/>
            <person name="Preuss D."/>
            <person name="Nierman W.C."/>
            <person name="White O."/>
            <person name="Eisen J.A."/>
            <person name="Salzberg S.L."/>
            <person name="Fraser C.M."/>
            <person name="Venter J.C."/>
        </authorList>
    </citation>
    <scope>NUCLEOTIDE SEQUENCE [LARGE SCALE GENOMIC DNA]</scope>
    <source>
        <strain>cv. Columbia</strain>
    </source>
</reference>
<reference key="3">
    <citation type="journal article" date="2017" name="Plant J.">
        <title>Araport11: a complete reannotation of the Arabidopsis thaliana reference genome.</title>
        <authorList>
            <person name="Cheng C.Y."/>
            <person name="Krishnakumar V."/>
            <person name="Chan A.P."/>
            <person name="Thibaud-Nissen F."/>
            <person name="Schobel S."/>
            <person name="Town C.D."/>
        </authorList>
    </citation>
    <scope>GENOME REANNOTATION</scope>
    <source>
        <strain>cv. Columbia</strain>
    </source>
</reference>
<reference key="4">
    <citation type="journal article" date="2003" name="Science">
        <title>Empirical analysis of transcriptional activity in the Arabidopsis genome.</title>
        <authorList>
            <person name="Yamada K."/>
            <person name="Lim J."/>
            <person name="Dale J.M."/>
            <person name="Chen H."/>
            <person name="Shinn P."/>
            <person name="Palm C.J."/>
            <person name="Southwick A.M."/>
            <person name="Wu H.C."/>
            <person name="Kim C.J."/>
            <person name="Nguyen M."/>
            <person name="Pham P.K."/>
            <person name="Cheuk R.F."/>
            <person name="Karlin-Newmann G."/>
            <person name="Liu S.X."/>
            <person name="Lam B."/>
            <person name="Sakano H."/>
            <person name="Wu T."/>
            <person name="Yu G."/>
            <person name="Miranda M."/>
            <person name="Quach H.L."/>
            <person name="Tripp M."/>
            <person name="Chang C.H."/>
            <person name="Lee J.M."/>
            <person name="Toriumi M.J."/>
            <person name="Chan M.M."/>
            <person name="Tang C.C."/>
            <person name="Onodera C.S."/>
            <person name="Deng J.M."/>
            <person name="Akiyama K."/>
            <person name="Ansari Y."/>
            <person name="Arakawa T."/>
            <person name="Banh J."/>
            <person name="Banno F."/>
            <person name="Bowser L."/>
            <person name="Brooks S.Y."/>
            <person name="Carninci P."/>
            <person name="Chao Q."/>
            <person name="Choy N."/>
            <person name="Enju A."/>
            <person name="Goldsmith A.D."/>
            <person name="Gurjal M."/>
            <person name="Hansen N.F."/>
            <person name="Hayashizaki Y."/>
            <person name="Johnson-Hopson C."/>
            <person name="Hsuan V.W."/>
            <person name="Iida K."/>
            <person name="Karnes M."/>
            <person name="Khan S."/>
            <person name="Koesema E."/>
            <person name="Ishida J."/>
            <person name="Jiang P.X."/>
            <person name="Jones T."/>
            <person name="Kawai J."/>
            <person name="Kamiya A."/>
            <person name="Meyers C."/>
            <person name="Nakajima M."/>
            <person name="Narusaka M."/>
            <person name="Seki M."/>
            <person name="Sakurai T."/>
            <person name="Satou M."/>
            <person name="Tamse R."/>
            <person name="Vaysberg M."/>
            <person name="Wallender E.K."/>
            <person name="Wong C."/>
            <person name="Yamamura Y."/>
            <person name="Yuan S."/>
            <person name="Shinozaki K."/>
            <person name="Davis R.W."/>
            <person name="Theologis A."/>
            <person name="Ecker J.R."/>
        </authorList>
    </citation>
    <scope>NUCLEOTIDE SEQUENCE [LARGE SCALE MRNA]</scope>
    <source>
        <strain>cv. Columbia</strain>
    </source>
</reference>
<reference key="5">
    <citation type="submission" date="2006-07" db="EMBL/GenBank/DDBJ databases">
        <title>Large-scale analysis of RIKEN Arabidopsis full-length (RAFL) cDNAs.</title>
        <authorList>
            <person name="Totoki Y."/>
            <person name="Seki M."/>
            <person name="Ishida J."/>
            <person name="Nakajima M."/>
            <person name="Enju A."/>
            <person name="Kamiya A."/>
            <person name="Narusaka M."/>
            <person name="Shin-i T."/>
            <person name="Nakagawa M."/>
            <person name="Sakamoto N."/>
            <person name="Oishi K."/>
            <person name="Kohara Y."/>
            <person name="Kobayashi M."/>
            <person name="Toyoda A."/>
            <person name="Sakaki Y."/>
            <person name="Sakurai T."/>
            <person name="Iida K."/>
            <person name="Akiyama K."/>
            <person name="Satou M."/>
            <person name="Toyoda T."/>
            <person name="Konagaya A."/>
            <person name="Carninci P."/>
            <person name="Kawai J."/>
            <person name="Hayashizaki Y."/>
            <person name="Shinozaki K."/>
        </authorList>
    </citation>
    <scope>NUCLEOTIDE SEQUENCE [LARGE SCALE MRNA]</scope>
    <source>
        <strain>cv. Columbia</strain>
    </source>
</reference>
<reference key="6">
    <citation type="journal article" date="2002" name="Genome Biol.">
        <title>Evaluation and classification of RING-finger domains encoded by the Arabidopsis genome.</title>
        <authorList>
            <person name="Kosarev P."/>
            <person name="Mayer K.F.X."/>
            <person name="Hardtke C.S."/>
        </authorList>
    </citation>
    <scope>GENE FAMILY ORGANIZATION</scope>
</reference>
<reference key="7">
    <citation type="journal article" date="2005" name="Plant Physiol.">
        <title>Genome analysis and functional characterization of the E2 and RING-type E3 ligase ubiquitination enzymes of Arabidopsis.</title>
        <authorList>
            <person name="Kraft E."/>
            <person name="Stone S.L."/>
            <person name="Ma L."/>
            <person name="Su N."/>
            <person name="Gao Y."/>
            <person name="Lau O.-S."/>
            <person name="Deng X.-W."/>
            <person name="Callis J."/>
        </authorList>
    </citation>
    <scope>FUNCTION</scope>
    <scope>CATALYTIC ACTIVITY</scope>
</reference>
<reference key="8">
    <citation type="journal article" date="2006" name="J. Mol. Evol.">
        <title>The ATL gene family from Arabidopsis thaliana and Oryza sativa comprises a large number of putative ubiquitin ligases of the RING-H2 type.</title>
        <authorList>
            <person name="Serrano M."/>
            <person name="Parra S."/>
            <person name="Alcaraz L.D."/>
            <person name="Guzman P."/>
        </authorList>
    </citation>
    <scope>NOMENCLATURE</scope>
    <scope>GENE FAMILY ORGANIZATION</scope>
</reference>
<dbReference type="EC" id="2.3.2.27" evidence="4 5"/>
<dbReference type="EMBL" id="DQ086853">
    <property type="protein sequence ID" value="AAZ14057.1"/>
    <property type="molecule type" value="Genomic_DNA"/>
</dbReference>
<dbReference type="EMBL" id="AC005956">
    <property type="protein sequence ID" value="AAD23719.1"/>
    <property type="molecule type" value="Genomic_DNA"/>
</dbReference>
<dbReference type="EMBL" id="CP002685">
    <property type="protein sequence ID" value="AEC10111.1"/>
    <property type="molecule type" value="Genomic_DNA"/>
</dbReference>
<dbReference type="EMBL" id="AY074652">
    <property type="protein sequence ID" value="AAL69468.1"/>
    <property type="molecule type" value="mRNA"/>
</dbReference>
<dbReference type="EMBL" id="AK228239">
    <property type="protein sequence ID" value="BAF00187.1"/>
    <property type="molecule type" value="mRNA"/>
</dbReference>
<dbReference type="PIR" id="A84853">
    <property type="entry name" value="A84853"/>
</dbReference>
<dbReference type="RefSeq" id="NP_181765.1">
    <property type="nucleotide sequence ID" value="NM_129798.4"/>
</dbReference>
<dbReference type="SMR" id="Q9SLC3"/>
<dbReference type="BioGRID" id="4174">
    <property type="interactions" value="26"/>
</dbReference>
<dbReference type="IntAct" id="Q9SLC3">
    <property type="interactions" value="25"/>
</dbReference>
<dbReference type="STRING" id="3702.Q9SLC3"/>
<dbReference type="PaxDb" id="3702-AT2G42360.1"/>
<dbReference type="ProteomicsDB" id="246758"/>
<dbReference type="EnsemblPlants" id="AT2G42360.1">
    <property type="protein sequence ID" value="AT2G42360.1"/>
    <property type="gene ID" value="AT2G42360"/>
</dbReference>
<dbReference type="GeneID" id="818837"/>
<dbReference type="Gramene" id="AT2G42360.1">
    <property type="protein sequence ID" value="AT2G42360.1"/>
    <property type="gene ID" value="AT2G42360"/>
</dbReference>
<dbReference type="KEGG" id="ath:AT2G42360"/>
<dbReference type="Araport" id="AT2G42360"/>
<dbReference type="TAIR" id="AT2G42360">
    <property type="gene designation" value="ATL41"/>
</dbReference>
<dbReference type="eggNOG" id="KOG0800">
    <property type="taxonomic scope" value="Eukaryota"/>
</dbReference>
<dbReference type="HOGENOM" id="CLU_066543_2_1_1"/>
<dbReference type="InParanoid" id="Q9SLC3"/>
<dbReference type="OMA" id="DDRDHYW"/>
<dbReference type="OrthoDB" id="8062037at2759"/>
<dbReference type="PhylomeDB" id="Q9SLC3"/>
<dbReference type="UniPathway" id="UPA00143"/>
<dbReference type="PRO" id="PR:Q9SLC3"/>
<dbReference type="Proteomes" id="UP000006548">
    <property type="component" value="Chromosome 2"/>
</dbReference>
<dbReference type="ExpressionAtlas" id="Q9SLC3">
    <property type="expression patterns" value="baseline and differential"/>
</dbReference>
<dbReference type="GO" id="GO:0016020">
    <property type="term" value="C:membrane"/>
    <property type="evidence" value="ECO:0007669"/>
    <property type="project" value="UniProtKB-SubCell"/>
</dbReference>
<dbReference type="GO" id="GO:0004842">
    <property type="term" value="F:ubiquitin-protein transferase activity"/>
    <property type="evidence" value="ECO:0000314"/>
    <property type="project" value="UniProtKB"/>
</dbReference>
<dbReference type="GO" id="GO:0008270">
    <property type="term" value="F:zinc ion binding"/>
    <property type="evidence" value="ECO:0007669"/>
    <property type="project" value="UniProtKB-KW"/>
</dbReference>
<dbReference type="GO" id="GO:0016567">
    <property type="term" value="P:protein ubiquitination"/>
    <property type="evidence" value="ECO:0000314"/>
    <property type="project" value="UniProtKB"/>
</dbReference>
<dbReference type="CDD" id="cd16461">
    <property type="entry name" value="RING-H2_EL5-like"/>
    <property type="match status" value="1"/>
</dbReference>
<dbReference type="FunFam" id="3.30.40.10:FF:000836">
    <property type="entry name" value="RING-H2 finger protein ATL40"/>
    <property type="match status" value="1"/>
</dbReference>
<dbReference type="Gene3D" id="3.30.40.10">
    <property type="entry name" value="Zinc/RING finger domain, C3HC4 (zinc finger)"/>
    <property type="match status" value="1"/>
</dbReference>
<dbReference type="InterPro" id="IPR001841">
    <property type="entry name" value="Znf_RING"/>
</dbReference>
<dbReference type="InterPro" id="IPR013083">
    <property type="entry name" value="Znf_RING/FYVE/PHD"/>
</dbReference>
<dbReference type="PANTHER" id="PTHR46539:SF29">
    <property type="entry name" value="(WILD MALAYSIAN BANANA) HYPOTHETICAL PROTEIN"/>
    <property type="match status" value="1"/>
</dbReference>
<dbReference type="PANTHER" id="PTHR46539">
    <property type="entry name" value="E3 UBIQUITIN-PROTEIN LIGASE ATL42"/>
    <property type="match status" value="1"/>
</dbReference>
<dbReference type="Pfam" id="PF13639">
    <property type="entry name" value="zf-RING_2"/>
    <property type="match status" value="1"/>
</dbReference>
<dbReference type="SMART" id="SM00184">
    <property type="entry name" value="RING"/>
    <property type="match status" value="1"/>
</dbReference>
<dbReference type="SUPFAM" id="SSF57850">
    <property type="entry name" value="RING/U-box"/>
    <property type="match status" value="1"/>
</dbReference>
<dbReference type="PROSITE" id="PS50089">
    <property type="entry name" value="ZF_RING_2"/>
    <property type="match status" value="1"/>
</dbReference>
<protein>
    <recommendedName>
        <fullName>E3 ubiquitin-protein ligase ATL41</fullName>
        <ecNumber evidence="4 5">2.3.2.27</ecNumber>
    </recommendedName>
    <alternativeName>
        <fullName>RING-H2 finger protein ATL41</fullName>
    </alternativeName>
    <alternativeName>
        <fullName evidence="6">RING-type E3 ubiquitin transferase ATL41</fullName>
    </alternativeName>
</protein>
<sequence length="236" mass="26443">MSSNDRDHRRFNSDHHSFWPNPSTYDLNSKIMLAAVASLSGVILIVFALHLYARFVLRRRREAFRGLPVIFRHPFEMPKRGLNPTVIASLPTFTVGATDGVAASATECAVCLSVLKEQDKARELPNCKHIFHVDCVDTWLTTCSTCPVCRTEVEPRPRLEPEPREGPVGTAPQLLVETRLNLTVEAASSSSSDNKTVVSPASRLNSFRKILTRERSSNRINHSCPDQDRVADLERH</sequence>
<gene>
    <name type="primary">ATL41</name>
    <name type="ordered locus">At2g42360</name>
    <name type="ORF">MHK10.8</name>
</gene>
<comment type="function">
    <text evidence="4 5">E3 ubiquitin-protein ligase able to catalyze polyubiquitination with ubiquitin-conjugating enzyme E2 UBC8, UBC10, UBC11, UBC28, UBC29, UBC30, UBC35 and UBC36 in vitro.</text>
</comment>
<comment type="catalytic activity">
    <reaction evidence="4 5">
        <text>S-ubiquitinyl-[E2 ubiquitin-conjugating enzyme]-L-cysteine + [acceptor protein]-L-lysine = [E2 ubiquitin-conjugating enzyme]-L-cysteine + N(6)-ubiquitinyl-[acceptor protein]-L-lysine.</text>
        <dbReference type="EC" id="2.3.2.27"/>
    </reaction>
</comment>
<comment type="pathway">
    <text>Protein modification; protein ubiquitination.</text>
</comment>
<comment type="subcellular location">
    <subcellularLocation>
        <location evidence="6">Membrane</location>
        <topology evidence="6">Single-pass membrane protein</topology>
    </subcellularLocation>
</comment>
<comment type="domain">
    <text evidence="1">The RING-type zinc finger domain mediates binding to an E2 ubiquitin-conjugating enzyme.</text>
</comment>
<comment type="similarity">
    <text evidence="6">Belongs to the RING-type zinc finger family. ATL subfamily.</text>
</comment>
<proteinExistence type="evidence at protein level"/>
<evidence type="ECO:0000250" key="1"/>
<evidence type="ECO:0000255" key="2"/>
<evidence type="ECO:0000255" key="3">
    <source>
        <dbReference type="PROSITE-ProRule" id="PRU00175"/>
    </source>
</evidence>
<evidence type="ECO:0000269" key="4">
    <source>
    </source>
</evidence>
<evidence type="ECO:0000269" key="5">
    <source>
    </source>
</evidence>
<evidence type="ECO:0000305" key="6"/>
<name>ATL41_ARATH</name>